<name>MURA_TREDE</name>
<organism>
    <name type="scientific">Treponema denticola (strain ATCC 35405 / DSM 14222 / CIP 103919 / JCM 8153 / KCTC 15104)</name>
    <dbReference type="NCBI Taxonomy" id="243275"/>
    <lineage>
        <taxon>Bacteria</taxon>
        <taxon>Pseudomonadati</taxon>
        <taxon>Spirochaetota</taxon>
        <taxon>Spirochaetia</taxon>
        <taxon>Spirochaetales</taxon>
        <taxon>Treponemataceae</taxon>
        <taxon>Treponema</taxon>
    </lineage>
</organism>
<protein>
    <recommendedName>
        <fullName evidence="1">UDP-N-acetylglucosamine 1-carboxyvinyltransferase</fullName>
        <ecNumber evidence="1">2.5.1.7</ecNumber>
    </recommendedName>
    <alternativeName>
        <fullName evidence="1">Enoylpyruvate transferase</fullName>
    </alternativeName>
    <alternativeName>
        <fullName evidence="1">UDP-N-acetylglucosamine enolpyruvyl transferase</fullName>
        <shortName evidence="1">EPT</shortName>
    </alternativeName>
</protein>
<proteinExistence type="inferred from homology"/>
<gene>
    <name evidence="1" type="primary">murA</name>
    <name type="ordered locus">TDE_0641</name>
</gene>
<dbReference type="EC" id="2.5.1.7" evidence="1"/>
<dbReference type="EMBL" id="AE017226">
    <property type="protein sequence ID" value="AAS11136.1"/>
    <property type="molecule type" value="Genomic_DNA"/>
</dbReference>
<dbReference type="RefSeq" id="NP_971255.1">
    <property type="nucleotide sequence ID" value="NC_002967.9"/>
</dbReference>
<dbReference type="RefSeq" id="WP_002669886.1">
    <property type="nucleotide sequence ID" value="NC_002967.9"/>
</dbReference>
<dbReference type="SMR" id="Q73Q03"/>
<dbReference type="STRING" id="243275.TDE_0641"/>
<dbReference type="PaxDb" id="243275-TDE_0641"/>
<dbReference type="GeneID" id="2740472"/>
<dbReference type="KEGG" id="tde:TDE_0641"/>
<dbReference type="PATRIC" id="fig|243275.7.peg.619"/>
<dbReference type="eggNOG" id="COG0766">
    <property type="taxonomic scope" value="Bacteria"/>
</dbReference>
<dbReference type="HOGENOM" id="CLU_027387_0_1_12"/>
<dbReference type="OrthoDB" id="9803760at2"/>
<dbReference type="UniPathway" id="UPA00219"/>
<dbReference type="Proteomes" id="UP000008212">
    <property type="component" value="Chromosome"/>
</dbReference>
<dbReference type="GO" id="GO:0005737">
    <property type="term" value="C:cytoplasm"/>
    <property type="evidence" value="ECO:0007669"/>
    <property type="project" value="UniProtKB-SubCell"/>
</dbReference>
<dbReference type="GO" id="GO:0008760">
    <property type="term" value="F:UDP-N-acetylglucosamine 1-carboxyvinyltransferase activity"/>
    <property type="evidence" value="ECO:0007669"/>
    <property type="project" value="UniProtKB-UniRule"/>
</dbReference>
<dbReference type="GO" id="GO:0051301">
    <property type="term" value="P:cell division"/>
    <property type="evidence" value="ECO:0007669"/>
    <property type="project" value="UniProtKB-KW"/>
</dbReference>
<dbReference type="GO" id="GO:0071555">
    <property type="term" value="P:cell wall organization"/>
    <property type="evidence" value="ECO:0007669"/>
    <property type="project" value="UniProtKB-KW"/>
</dbReference>
<dbReference type="GO" id="GO:0009252">
    <property type="term" value="P:peptidoglycan biosynthetic process"/>
    <property type="evidence" value="ECO:0007669"/>
    <property type="project" value="UniProtKB-UniRule"/>
</dbReference>
<dbReference type="GO" id="GO:0008360">
    <property type="term" value="P:regulation of cell shape"/>
    <property type="evidence" value="ECO:0007669"/>
    <property type="project" value="UniProtKB-KW"/>
</dbReference>
<dbReference type="GO" id="GO:0019277">
    <property type="term" value="P:UDP-N-acetylgalactosamine biosynthetic process"/>
    <property type="evidence" value="ECO:0007669"/>
    <property type="project" value="InterPro"/>
</dbReference>
<dbReference type="CDD" id="cd01555">
    <property type="entry name" value="UdpNAET"/>
    <property type="match status" value="1"/>
</dbReference>
<dbReference type="Gene3D" id="3.65.10.10">
    <property type="entry name" value="Enolpyruvate transferase domain"/>
    <property type="match status" value="2"/>
</dbReference>
<dbReference type="HAMAP" id="MF_00111">
    <property type="entry name" value="MurA"/>
    <property type="match status" value="1"/>
</dbReference>
<dbReference type="InterPro" id="IPR001986">
    <property type="entry name" value="Enolpyruvate_Tfrase_dom"/>
</dbReference>
<dbReference type="InterPro" id="IPR036968">
    <property type="entry name" value="Enolpyruvate_Tfrase_sf"/>
</dbReference>
<dbReference type="InterPro" id="IPR050068">
    <property type="entry name" value="MurA_subfamily"/>
</dbReference>
<dbReference type="InterPro" id="IPR013792">
    <property type="entry name" value="RNA3'P_cycl/enolpyr_Trfase_a/b"/>
</dbReference>
<dbReference type="InterPro" id="IPR005750">
    <property type="entry name" value="UDP_GlcNAc_COvinyl_MurA"/>
</dbReference>
<dbReference type="NCBIfam" id="TIGR01072">
    <property type="entry name" value="murA"/>
    <property type="match status" value="1"/>
</dbReference>
<dbReference type="NCBIfam" id="NF006873">
    <property type="entry name" value="PRK09369.1"/>
    <property type="match status" value="1"/>
</dbReference>
<dbReference type="PANTHER" id="PTHR43783">
    <property type="entry name" value="UDP-N-ACETYLGLUCOSAMINE 1-CARBOXYVINYLTRANSFERASE"/>
    <property type="match status" value="1"/>
</dbReference>
<dbReference type="PANTHER" id="PTHR43783:SF1">
    <property type="entry name" value="UDP-N-ACETYLGLUCOSAMINE 1-CARBOXYVINYLTRANSFERASE"/>
    <property type="match status" value="1"/>
</dbReference>
<dbReference type="Pfam" id="PF00275">
    <property type="entry name" value="EPSP_synthase"/>
    <property type="match status" value="1"/>
</dbReference>
<dbReference type="SUPFAM" id="SSF55205">
    <property type="entry name" value="EPT/RTPC-like"/>
    <property type="match status" value="1"/>
</dbReference>
<reference key="1">
    <citation type="journal article" date="2004" name="Proc. Natl. Acad. Sci. U.S.A.">
        <title>Comparison of the genome of the oral pathogen Treponema denticola with other spirochete genomes.</title>
        <authorList>
            <person name="Seshadri R."/>
            <person name="Myers G.S.A."/>
            <person name="Tettelin H."/>
            <person name="Eisen J.A."/>
            <person name="Heidelberg J.F."/>
            <person name="Dodson R.J."/>
            <person name="Davidsen T.M."/>
            <person name="DeBoy R.T."/>
            <person name="Fouts D.E."/>
            <person name="Haft D.H."/>
            <person name="Selengut J."/>
            <person name="Ren Q."/>
            <person name="Brinkac L.M."/>
            <person name="Madupu R."/>
            <person name="Kolonay J.F."/>
            <person name="Durkin S.A."/>
            <person name="Daugherty S.C."/>
            <person name="Shetty J."/>
            <person name="Shvartsbeyn A."/>
            <person name="Gebregeorgis E."/>
            <person name="Geer K."/>
            <person name="Tsegaye G."/>
            <person name="Malek J.A."/>
            <person name="Ayodeji B."/>
            <person name="Shatsman S."/>
            <person name="McLeod M.P."/>
            <person name="Smajs D."/>
            <person name="Howell J.K."/>
            <person name="Pal S."/>
            <person name="Amin A."/>
            <person name="Vashisth P."/>
            <person name="McNeill T.Z."/>
            <person name="Xiang Q."/>
            <person name="Sodergren E."/>
            <person name="Baca E."/>
            <person name="Weinstock G.M."/>
            <person name="Norris S.J."/>
            <person name="Fraser C.M."/>
            <person name="Paulsen I.T."/>
        </authorList>
    </citation>
    <scope>NUCLEOTIDE SEQUENCE [LARGE SCALE GENOMIC DNA]</scope>
    <source>
        <strain>ATCC 35405 / DSM 14222 / CIP 103919 / JCM 8153 / KCTC 15104</strain>
    </source>
</reference>
<sequence length="426" mass="46246">MHEYIIQGGFPVNGTIKASGNKNAALPCIAAAILSEEPIILKNIPEIEDVFVMLQVFEALGGHYEKIEKNVFKLQIEKVKTSKIPEDLATKIRASILFAGPLLARTGKAVLPPPGGDVIGRRRLDTHFLALTELGARVETDQNFSFIAHKLMGEDIFLDEASVTATENAIMAASLAEGTTIISNAASEPHVQELCKMLNKMGAKISGVGSNILTIEGVKKLNGTEHRIGPDYMEIGSFIGLAAVTRGQLKITDVEPRDMRPLRVAFGKLGIGWSLEGTTLTVPDKQKMQVNCDLGGMIPKIDDAPWPGFPPDLTSIMTVIATQVEGTVLIHEKMFESRMFFVDKLIGMGARITLCDPHRAVISGPSSLHGSELVSPDVRAGMAMVIAACCARGESIIRNVYQIERGYEHLVERLKSIGVKIELKEK</sequence>
<evidence type="ECO:0000255" key="1">
    <source>
        <dbReference type="HAMAP-Rule" id="MF_00111"/>
    </source>
</evidence>
<accession>Q73Q03</accession>
<keyword id="KW-0131">Cell cycle</keyword>
<keyword id="KW-0132">Cell division</keyword>
<keyword id="KW-0133">Cell shape</keyword>
<keyword id="KW-0961">Cell wall biogenesis/degradation</keyword>
<keyword id="KW-0963">Cytoplasm</keyword>
<keyword id="KW-0573">Peptidoglycan synthesis</keyword>
<keyword id="KW-1185">Reference proteome</keyword>
<keyword id="KW-0808">Transferase</keyword>
<comment type="function">
    <text evidence="1">Cell wall formation. Adds enolpyruvyl to UDP-N-acetylglucosamine.</text>
</comment>
<comment type="catalytic activity">
    <reaction evidence="1">
        <text>phosphoenolpyruvate + UDP-N-acetyl-alpha-D-glucosamine = UDP-N-acetyl-3-O-(1-carboxyvinyl)-alpha-D-glucosamine + phosphate</text>
        <dbReference type="Rhea" id="RHEA:18681"/>
        <dbReference type="ChEBI" id="CHEBI:43474"/>
        <dbReference type="ChEBI" id="CHEBI:57705"/>
        <dbReference type="ChEBI" id="CHEBI:58702"/>
        <dbReference type="ChEBI" id="CHEBI:68483"/>
        <dbReference type="EC" id="2.5.1.7"/>
    </reaction>
</comment>
<comment type="pathway">
    <text evidence="1">Cell wall biogenesis; peptidoglycan biosynthesis.</text>
</comment>
<comment type="subcellular location">
    <subcellularLocation>
        <location evidence="1">Cytoplasm</location>
    </subcellularLocation>
</comment>
<comment type="similarity">
    <text evidence="1">Belongs to the EPSP synthase family. MurA subfamily.</text>
</comment>
<feature type="chain" id="PRO_0000231296" description="UDP-N-acetylglucosamine 1-carboxyvinyltransferase">
    <location>
        <begin position="1"/>
        <end position="426"/>
    </location>
</feature>
<feature type="active site" description="Proton donor" evidence="1">
    <location>
        <position position="117"/>
    </location>
</feature>
<feature type="binding site" evidence="1">
    <location>
        <begin position="22"/>
        <end position="23"/>
    </location>
    <ligand>
        <name>phosphoenolpyruvate</name>
        <dbReference type="ChEBI" id="CHEBI:58702"/>
    </ligand>
</feature>
<feature type="binding site" evidence="1">
    <location>
        <position position="93"/>
    </location>
    <ligand>
        <name>UDP-N-acetyl-alpha-D-glucosamine</name>
        <dbReference type="ChEBI" id="CHEBI:57705"/>
    </ligand>
</feature>
<feature type="binding site" evidence="1">
    <location>
        <position position="312"/>
    </location>
    <ligand>
        <name>UDP-N-acetyl-alpha-D-glucosamine</name>
        <dbReference type="ChEBI" id="CHEBI:57705"/>
    </ligand>
</feature>
<feature type="binding site" evidence="1">
    <location>
        <position position="334"/>
    </location>
    <ligand>
        <name>UDP-N-acetyl-alpha-D-glucosamine</name>
        <dbReference type="ChEBI" id="CHEBI:57705"/>
    </ligand>
</feature>